<gene>
    <name evidence="7" type="primary">GAO1</name>
</gene>
<evidence type="ECO:0000250" key="1"/>
<evidence type="ECO:0000250" key="2">
    <source>
        <dbReference type="UniProtKB" id="D5JBW8"/>
    </source>
</evidence>
<evidence type="ECO:0000250" key="3">
    <source>
        <dbReference type="UniProtKB" id="P04798"/>
    </source>
</evidence>
<evidence type="ECO:0000255" key="4"/>
<evidence type="ECO:0000255" key="5">
    <source>
        <dbReference type="PROSITE-ProRule" id="PRU00498"/>
    </source>
</evidence>
<evidence type="ECO:0000269" key="6">
    <source>
    </source>
</evidence>
<evidence type="ECO:0000303" key="7">
    <source>
    </source>
</evidence>
<evidence type="ECO:0000303" key="8">
    <source>
    </source>
</evidence>
<evidence type="ECO:0000305" key="9"/>
<keyword id="KW-0256">Endoplasmic reticulum</keyword>
<keyword id="KW-0325">Glycoprotein</keyword>
<keyword id="KW-0349">Heme</keyword>
<keyword id="KW-0408">Iron</keyword>
<keyword id="KW-0472">Membrane</keyword>
<keyword id="KW-0479">Metal-binding</keyword>
<keyword id="KW-0503">Monooxygenase</keyword>
<keyword id="KW-0560">Oxidoreductase</keyword>
<keyword id="KW-0735">Signal-anchor</keyword>
<keyword id="KW-0812">Transmembrane</keyword>
<keyword id="KW-1133">Transmembrane helix</keyword>
<name>GAO_LACSA</name>
<feature type="chain" id="PRO_0000412765" description="Germacrene A hydroxylase">
    <location>
        <begin position="1"/>
        <end position="488"/>
    </location>
</feature>
<feature type="topological domain" description="Cytoplasmic" evidence="4">
    <location>
        <begin position="1"/>
        <end position="6"/>
    </location>
</feature>
<feature type="transmembrane region" description="Helical; Signal-anchor for type II membrane protein" evidence="4">
    <location>
        <begin position="7"/>
        <end position="23"/>
    </location>
</feature>
<feature type="topological domain" description="Lumenal" evidence="4">
    <location>
        <begin position="24"/>
        <end position="488"/>
    </location>
</feature>
<feature type="binding site" description="axial binding residue" evidence="3">
    <location>
        <position position="432"/>
    </location>
    <ligand>
        <name>heme</name>
        <dbReference type="ChEBI" id="CHEBI:30413"/>
    </ligand>
    <ligandPart>
        <name>Fe</name>
        <dbReference type="ChEBI" id="CHEBI:18248"/>
    </ligandPart>
</feature>
<feature type="glycosylation site" description="N-linked (GlcNAc...) asparagine" evidence="5">
    <location>
        <position position="169"/>
    </location>
</feature>
<feature type="glycosylation site" description="N-linked (GlcNAc...) asparagine" evidence="5">
    <location>
        <position position="260"/>
    </location>
</feature>
<feature type="glycosylation site" description="N-linked (GlcNAc...) asparagine" evidence="5">
    <location>
        <position position="379"/>
    </location>
</feature>
<reference key="1">
    <citation type="journal article" date="2010" name="J. Biol. Chem.">
        <title>Biochemical conservation and evolution of germacrene A oxidase in asteraceae.</title>
        <authorList>
            <person name="Nguyen D.T."/>
            <person name="Goepfert J.C."/>
            <person name="Ikezawa N."/>
            <person name="Macnevin G."/>
            <person name="Kathiresan M."/>
            <person name="Conrad J."/>
            <person name="Spring O."/>
            <person name="Ro D.-K."/>
        </authorList>
    </citation>
    <scope>NUCLEOTIDE SEQUENCE [MRNA]</scope>
    <scope>FUNCTION</scope>
    <scope>CATALYTIC ACTIVITY</scope>
</reference>
<reference key="2">
    <citation type="journal article" date="2019" name="Nat. Prod. Rep.">
        <title>Non-volatile natural products in plant glandular trichomes: chemistry, biological activities and biosynthesis.</title>
        <authorList>
            <person name="Liu Y."/>
            <person name="Jing S.-X."/>
            <person name="Luo S.-H."/>
            <person name="Li S.-H."/>
        </authorList>
    </citation>
    <scope>PATHWAY</scope>
    <scope>REVIEW</scope>
</reference>
<protein>
    <recommendedName>
        <fullName evidence="7">Germacrene A hydroxylase</fullName>
        <ecNumber evidence="6">1.14.14.95</ecNumber>
    </recommendedName>
    <alternativeName>
        <fullName evidence="7">Germacrene A oxidase</fullName>
        <shortName evidence="7">LsGAO</shortName>
    </alternativeName>
</protein>
<proteinExistence type="evidence at protein level"/>
<organism>
    <name type="scientific">Lactuca sativa</name>
    <name type="common">Garden lettuce</name>
    <dbReference type="NCBI Taxonomy" id="4236"/>
    <lineage>
        <taxon>Eukaryota</taxon>
        <taxon>Viridiplantae</taxon>
        <taxon>Streptophyta</taxon>
        <taxon>Embryophyta</taxon>
        <taxon>Tracheophyta</taxon>
        <taxon>Spermatophyta</taxon>
        <taxon>Magnoliopsida</taxon>
        <taxon>eudicotyledons</taxon>
        <taxon>Gunneridae</taxon>
        <taxon>Pentapetalae</taxon>
        <taxon>asterids</taxon>
        <taxon>campanulids</taxon>
        <taxon>Asterales</taxon>
        <taxon>Asteraceae</taxon>
        <taxon>Cichorioideae</taxon>
        <taxon>Cichorieae</taxon>
        <taxon>Lactucinae</taxon>
        <taxon>Lactuca</taxon>
    </lineage>
</organism>
<dbReference type="EC" id="1.14.14.95" evidence="6"/>
<dbReference type="EMBL" id="GU198171">
    <property type="protein sequence ID" value="ADF32078.1"/>
    <property type="molecule type" value="mRNA"/>
</dbReference>
<dbReference type="SMR" id="D5J9U8"/>
<dbReference type="GlyCosmos" id="D5J9U8">
    <property type="glycosylation" value="3 sites, No reported glycans"/>
</dbReference>
<dbReference type="KEGG" id="ag:ADF32078"/>
<dbReference type="BioCyc" id="MetaCyc:MONOMER-15751"/>
<dbReference type="BRENDA" id="1.14.14.95">
    <property type="organism ID" value="2910"/>
</dbReference>
<dbReference type="UniPathway" id="UPA00213"/>
<dbReference type="GO" id="GO:0005789">
    <property type="term" value="C:endoplasmic reticulum membrane"/>
    <property type="evidence" value="ECO:0007669"/>
    <property type="project" value="UniProtKB-SubCell"/>
</dbReference>
<dbReference type="GO" id="GO:0106223">
    <property type="term" value="F:germacrene A hydroxylase activity"/>
    <property type="evidence" value="ECO:0000314"/>
    <property type="project" value="UniProtKB"/>
</dbReference>
<dbReference type="GO" id="GO:0020037">
    <property type="term" value="F:heme binding"/>
    <property type="evidence" value="ECO:0007669"/>
    <property type="project" value="InterPro"/>
</dbReference>
<dbReference type="GO" id="GO:0005506">
    <property type="term" value="F:iron ion binding"/>
    <property type="evidence" value="ECO:0007669"/>
    <property type="project" value="InterPro"/>
</dbReference>
<dbReference type="GO" id="GO:0051762">
    <property type="term" value="P:sesquiterpene biosynthetic process"/>
    <property type="evidence" value="ECO:0000314"/>
    <property type="project" value="UniProtKB"/>
</dbReference>
<dbReference type="GO" id="GO:0016114">
    <property type="term" value="P:terpenoid biosynthetic process"/>
    <property type="evidence" value="ECO:0007669"/>
    <property type="project" value="UniProtKB-UniPathway"/>
</dbReference>
<dbReference type="CDD" id="cd11072">
    <property type="entry name" value="CYP71-like"/>
    <property type="match status" value="1"/>
</dbReference>
<dbReference type="FunFam" id="1.10.630.10:FF:000043">
    <property type="entry name" value="Cytochrome P450 99A2"/>
    <property type="match status" value="1"/>
</dbReference>
<dbReference type="Gene3D" id="1.10.630.10">
    <property type="entry name" value="Cytochrome P450"/>
    <property type="match status" value="1"/>
</dbReference>
<dbReference type="InterPro" id="IPR001128">
    <property type="entry name" value="Cyt_P450"/>
</dbReference>
<dbReference type="InterPro" id="IPR017972">
    <property type="entry name" value="Cyt_P450_CS"/>
</dbReference>
<dbReference type="InterPro" id="IPR002401">
    <property type="entry name" value="Cyt_P450_E_grp-I"/>
</dbReference>
<dbReference type="InterPro" id="IPR036396">
    <property type="entry name" value="Cyt_P450_sf"/>
</dbReference>
<dbReference type="PANTHER" id="PTHR47955">
    <property type="entry name" value="CYTOCHROME P450 FAMILY 71 PROTEIN"/>
    <property type="match status" value="1"/>
</dbReference>
<dbReference type="PANTHER" id="PTHR47955:SF9">
    <property type="entry name" value="PREMNASPIRODIENE OXYGENASE-LIKE"/>
    <property type="match status" value="1"/>
</dbReference>
<dbReference type="Pfam" id="PF00067">
    <property type="entry name" value="p450"/>
    <property type="match status" value="1"/>
</dbReference>
<dbReference type="PRINTS" id="PR00463">
    <property type="entry name" value="EP450I"/>
</dbReference>
<dbReference type="PRINTS" id="PR00385">
    <property type="entry name" value="P450"/>
</dbReference>
<dbReference type="SUPFAM" id="SSF48264">
    <property type="entry name" value="Cytochrome P450"/>
    <property type="match status" value="1"/>
</dbReference>
<dbReference type="PROSITE" id="PS00086">
    <property type="entry name" value="CYTOCHROME_P450"/>
    <property type="match status" value="1"/>
</dbReference>
<accession>D5J9U8</accession>
<comment type="function">
    <text evidence="6">Involved in the biosynthesis of germacrene-derived sesquiterpene lactones (PubMed:20351109). Catalyzes three consecutive oxidations of germacrene A to produce germacrene A acid (PubMed:20351109). Could also catalyze the three-step oxidation of non-natural substrate amorphadiene to artemisinic acid (PubMed:20351109).</text>
</comment>
<comment type="catalytic activity">
    <reaction evidence="6">
        <text>(+)-(R)-germacrene A + 3 reduced [NADPH--hemoprotein reductase] + 3 O2 = germacra-1(10),4,11(13)-trien-12-oate + 3 oxidized [NADPH--hemoprotein reductase] + 4 H2O + 4 H(+)</text>
        <dbReference type="Rhea" id="RHEA:30303"/>
        <dbReference type="Rhea" id="RHEA-COMP:11964"/>
        <dbReference type="Rhea" id="RHEA-COMP:11965"/>
        <dbReference type="ChEBI" id="CHEBI:15377"/>
        <dbReference type="ChEBI" id="CHEBI:15378"/>
        <dbReference type="ChEBI" id="CHEBI:15379"/>
        <dbReference type="ChEBI" id="CHEBI:41595"/>
        <dbReference type="ChEBI" id="CHEBI:57618"/>
        <dbReference type="ChEBI" id="CHEBI:58210"/>
        <dbReference type="ChEBI" id="CHEBI:61301"/>
        <dbReference type="EC" id="1.14.14.95"/>
    </reaction>
    <physiologicalReaction direction="left-to-right" evidence="6">
        <dbReference type="Rhea" id="RHEA:30304"/>
    </physiologicalReaction>
</comment>
<comment type="cofactor">
    <cofactor evidence="1">
        <name>heme</name>
        <dbReference type="ChEBI" id="CHEBI:30413"/>
    </cofactor>
</comment>
<comment type="pathway">
    <text evidence="8">Secondary metabolite biosynthesis; terpenoid biosynthesis.</text>
</comment>
<comment type="subcellular location">
    <subcellularLocation>
        <location evidence="2">Endoplasmic reticulum membrane</location>
        <topology evidence="2">Single-pass type II membrane protein</topology>
    </subcellularLocation>
</comment>
<comment type="similarity">
    <text evidence="9">Belongs to the cytochrome P450 family.</text>
</comment>
<sequence length="488" mass="54963">MELSITTSIALATIVFFLYKLATRPKSTKKQLPEASRLPIIGHMHHLIGTMPHRGVMDLARKHGSLMHLQLGEVSTIVVSSPKWAKEILTTYDITFANRPETLTGEIIAYHNTDIVLAPYGEYWRQLRKLCTLELLSVKKVKSFQSIREEECWNLVKEVKESGSGKPINLSESIFTMIATILSRAAFGKGIKDQREFTEIVKEILRQTGGFDVADIFPSKKFLHHLSGKRARLTSIHKKLDNLINNIVAEHHVSTSSKANETLLDVLLRLKDSAEFPLTADNVKAIILDMFGAGTDTSSATVEWAISELIRCPRAMEKVQAELRQALNGKEKIQEEDIQDLAYLNLVIRETLRLHPPLPLVMPRECREPVNLAGYEIANKTKLIVNVFAINRDPEYWKDAEAFIPERFENNPNNIMGADYEYLPFGAGRRMCPGAALGLANVQLPLANILYHFNWKLPNGASHDQLDMTESFGATVQRKTELLLVPSF</sequence>